<keyword id="KW-0025">Alternative splicing</keyword>
<keyword id="KW-0067">ATP-binding</keyword>
<keyword id="KW-0150">Chloroplast</keyword>
<keyword id="KW-0342">GTP-binding</keyword>
<keyword id="KW-0418">Kinase</keyword>
<keyword id="KW-0547">Nucleotide-binding</keyword>
<keyword id="KW-0934">Plastid</keyword>
<keyword id="KW-1185">Reference proteome</keyword>
<keyword id="KW-0346">Stress response</keyword>
<keyword id="KW-0808">Transferase</keyword>
<keyword id="KW-0809">Transit peptide</keyword>
<comment type="function">
    <text evidence="1 9">May be involved in a rapid plant ppGpp (guanosine 3'-diphosphate 5'-diphosphate)-mediated response to pathogens and other stresses (By similarity). Unable to functionally complement E.coli relA mutants.</text>
</comment>
<comment type="catalytic activity">
    <reaction>
        <text>GTP + ATP = guanosine 3'-diphosphate 5'-triphosphate + AMP</text>
        <dbReference type="Rhea" id="RHEA:22088"/>
        <dbReference type="ChEBI" id="CHEBI:30616"/>
        <dbReference type="ChEBI" id="CHEBI:37565"/>
        <dbReference type="ChEBI" id="CHEBI:142410"/>
        <dbReference type="ChEBI" id="CHEBI:456215"/>
        <dbReference type="EC" id="2.7.6.5"/>
    </reaction>
</comment>
<comment type="subunit">
    <text evidence="7 8">Interacts with RPP4 (PubMed:11846877). Interacts with RPP5 (PubMed:10725385, PubMed:11846877).</text>
</comment>
<comment type="subcellular location">
    <subcellularLocation>
        <location evidence="9">Plastid</location>
        <location evidence="9">Chloroplast</location>
    </subcellularLocation>
</comment>
<comment type="alternative products">
    <event type="alternative splicing"/>
    <isoform>
        <id>F4JHA2-1</id>
        <name>1</name>
        <sequence type="displayed"/>
    </isoform>
    <isoform>
        <id>F4JHA2-2</id>
        <name>2</name>
        <sequence type="described" ref="VSP_055308"/>
    </isoform>
</comment>
<comment type="tissue specificity">
    <text evidence="9">Expressed in hypocotyls, shoots, cotyledons, rosette leaves, sepals and pistils.</text>
</comment>
<comment type="induction">
    <text evidence="9">Circadian-regulation with a peak at dusk. Down-regulated by wounding and 12-oxo-phytodienoic acid (OPDA).</text>
</comment>
<comment type="miscellaneous">
    <text>In the ecotype Landsberg erecta, RSH1 (AC P0DKG8) has been shown to interact with RPP5 (AC O04264).</text>
</comment>
<comment type="similarity">
    <text evidence="10">Belongs to the RelA/SpoT family.</text>
</comment>
<comment type="sequence caution" evidence="10">
    <conflict type="erroneous gene model prediction">
        <sequence resource="EMBL-CDS" id="CAB80719"/>
    </conflict>
</comment>
<accession>F4JHA2</accession>
<accession>Q0WUY0</accession>
<accession>Q9M112</accession>
<accession>Q9M5P7</accession>
<gene>
    <name type="primary">RSH1</name>
    <name type="ordered locus">At4g02260</name>
    <name type="ORF">T2H3.10</name>
</gene>
<name>RSH1C_ARATH</name>
<evidence type="ECO:0000250" key="1"/>
<evidence type="ECO:0000255" key="2"/>
<evidence type="ECO:0000255" key="3">
    <source>
        <dbReference type="PROSITE-ProRule" id="PRU01007"/>
    </source>
</evidence>
<evidence type="ECO:0000255" key="4">
    <source>
        <dbReference type="PROSITE-ProRule" id="PRU01175"/>
    </source>
</evidence>
<evidence type="ECO:0000255" key="5">
    <source>
        <dbReference type="PROSITE-ProRule" id="PRU01228"/>
    </source>
</evidence>
<evidence type="ECO:0000256" key="6">
    <source>
        <dbReference type="SAM" id="MobiDB-lite"/>
    </source>
</evidence>
<evidence type="ECO:0000269" key="7">
    <source>
    </source>
</evidence>
<evidence type="ECO:0000269" key="8">
    <source>
    </source>
</evidence>
<evidence type="ECO:0000269" key="9">
    <source>
    </source>
</evidence>
<evidence type="ECO:0000305" key="10"/>
<protein>
    <recommendedName>
        <fullName>Putative GTP diphosphokinase RSH1, chloroplastic</fullName>
        <ecNumber>2.7.6.5</ecNumber>
    </recommendedName>
    <alternativeName>
        <fullName>RelA/SpoT homolog 1</fullName>
        <shortName>AtRSH1</shortName>
    </alternativeName>
    <alternativeName>
        <fullName>ppGpp synthetase RSH1</fullName>
    </alternativeName>
</protein>
<feature type="transit peptide" description="Chloroplast" evidence="2">
    <location>
        <begin position="1"/>
        <end position="55"/>
    </location>
</feature>
<feature type="chain" id="PRO_0000429844" description="Putative GTP diphosphokinase RSH1, chloroplastic">
    <location>
        <begin position="56"/>
        <end position="884"/>
    </location>
</feature>
<feature type="domain" description="HD" evidence="4">
    <location>
        <begin position="172"/>
        <end position="279"/>
    </location>
</feature>
<feature type="domain" description="TGS" evidence="5">
    <location>
        <begin position="563"/>
        <end position="626"/>
    </location>
</feature>
<feature type="domain" description="ACT" evidence="3">
    <location>
        <begin position="797"/>
        <end position="868"/>
    </location>
</feature>
<feature type="region of interest" description="Disordered" evidence="6">
    <location>
        <begin position="711"/>
        <end position="747"/>
    </location>
</feature>
<feature type="compositionally biased region" description="Polar residues" evidence="6">
    <location>
        <begin position="711"/>
        <end position="727"/>
    </location>
</feature>
<feature type="splice variant" id="VSP_055308" description="In isoform 2." evidence="10">
    <location>
        <position position="403"/>
    </location>
</feature>
<feature type="sequence conflict" description="In Ref. 3; BAE99068." evidence="10" ref="3">
    <original>G</original>
    <variation>D</variation>
    <location>
        <position position="491"/>
    </location>
</feature>
<reference key="1">
    <citation type="journal article" date="1999" name="Nature">
        <title>Sequence and analysis of chromosome 4 of the plant Arabidopsis thaliana.</title>
        <authorList>
            <person name="Mayer K.F.X."/>
            <person name="Schueller C."/>
            <person name="Wambutt R."/>
            <person name="Murphy G."/>
            <person name="Volckaert G."/>
            <person name="Pohl T."/>
            <person name="Duesterhoeft A."/>
            <person name="Stiekema W."/>
            <person name="Entian K.-D."/>
            <person name="Terryn N."/>
            <person name="Harris B."/>
            <person name="Ansorge W."/>
            <person name="Brandt P."/>
            <person name="Grivell L.A."/>
            <person name="Rieger M."/>
            <person name="Weichselgartner M."/>
            <person name="de Simone V."/>
            <person name="Obermaier B."/>
            <person name="Mache R."/>
            <person name="Mueller M."/>
            <person name="Kreis M."/>
            <person name="Delseny M."/>
            <person name="Puigdomenech P."/>
            <person name="Watson M."/>
            <person name="Schmidtheini T."/>
            <person name="Reichert B."/>
            <person name="Portetelle D."/>
            <person name="Perez-Alonso M."/>
            <person name="Boutry M."/>
            <person name="Bancroft I."/>
            <person name="Vos P."/>
            <person name="Hoheisel J."/>
            <person name="Zimmermann W."/>
            <person name="Wedler H."/>
            <person name="Ridley P."/>
            <person name="Langham S.-A."/>
            <person name="McCullagh B."/>
            <person name="Bilham L."/>
            <person name="Robben J."/>
            <person name="van der Schueren J."/>
            <person name="Grymonprez B."/>
            <person name="Chuang Y.-J."/>
            <person name="Vandenbussche F."/>
            <person name="Braeken M."/>
            <person name="Weltjens I."/>
            <person name="Voet M."/>
            <person name="Bastiaens I."/>
            <person name="Aert R."/>
            <person name="Defoor E."/>
            <person name="Weitzenegger T."/>
            <person name="Bothe G."/>
            <person name="Ramsperger U."/>
            <person name="Hilbert H."/>
            <person name="Braun M."/>
            <person name="Holzer E."/>
            <person name="Brandt A."/>
            <person name="Peters S."/>
            <person name="van Staveren M."/>
            <person name="Dirkse W."/>
            <person name="Mooijman P."/>
            <person name="Klein Lankhorst R."/>
            <person name="Rose M."/>
            <person name="Hauf J."/>
            <person name="Koetter P."/>
            <person name="Berneiser S."/>
            <person name="Hempel S."/>
            <person name="Feldpausch M."/>
            <person name="Lamberth S."/>
            <person name="Van den Daele H."/>
            <person name="De Keyser A."/>
            <person name="Buysshaert C."/>
            <person name="Gielen J."/>
            <person name="Villarroel R."/>
            <person name="De Clercq R."/>
            <person name="van Montagu M."/>
            <person name="Rogers J."/>
            <person name="Cronin A."/>
            <person name="Quail M.A."/>
            <person name="Bray-Allen S."/>
            <person name="Clark L."/>
            <person name="Doggett J."/>
            <person name="Hall S."/>
            <person name="Kay M."/>
            <person name="Lennard N."/>
            <person name="McLay K."/>
            <person name="Mayes R."/>
            <person name="Pettett A."/>
            <person name="Rajandream M.A."/>
            <person name="Lyne M."/>
            <person name="Benes V."/>
            <person name="Rechmann S."/>
            <person name="Borkova D."/>
            <person name="Bloecker H."/>
            <person name="Scharfe M."/>
            <person name="Grimm M."/>
            <person name="Loehnert T.-H."/>
            <person name="Dose S."/>
            <person name="de Haan M."/>
            <person name="Maarse A.C."/>
            <person name="Schaefer M."/>
            <person name="Mueller-Auer S."/>
            <person name="Gabel C."/>
            <person name="Fuchs M."/>
            <person name="Fartmann B."/>
            <person name="Granderath K."/>
            <person name="Dauner D."/>
            <person name="Herzl A."/>
            <person name="Neumann S."/>
            <person name="Argiriou A."/>
            <person name="Vitale D."/>
            <person name="Liguori R."/>
            <person name="Piravandi E."/>
            <person name="Massenet O."/>
            <person name="Quigley F."/>
            <person name="Clabauld G."/>
            <person name="Muendlein A."/>
            <person name="Felber R."/>
            <person name="Schnabl S."/>
            <person name="Hiller R."/>
            <person name="Schmidt W."/>
            <person name="Lecharny A."/>
            <person name="Aubourg S."/>
            <person name="Chefdor F."/>
            <person name="Cooke R."/>
            <person name="Berger C."/>
            <person name="Monfort A."/>
            <person name="Casacuberta E."/>
            <person name="Gibbons T."/>
            <person name="Weber N."/>
            <person name="Vandenbol M."/>
            <person name="Bargues M."/>
            <person name="Terol J."/>
            <person name="Torres A."/>
            <person name="Perez-Perez A."/>
            <person name="Purnelle B."/>
            <person name="Bent E."/>
            <person name="Johnson S."/>
            <person name="Tacon D."/>
            <person name="Jesse T."/>
            <person name="Heijnen L."/>
            <person name="Schwarz S."/>
            <person name="Scholler P."/>
            <person name="Heber S."/>
            <person name="Francs P."/>
            <person name="Bielke C."/>
            <person name="Frishman D."/>
            <person name="Haase D."/>
            <person name="Lemcke K."/>
            <person name="Mewes H.-W."/>
            <person name="Stocker S."/>
            <person name="Zaccaria P."/>
            <person name="Bevan M."/>
            <person name="Wilson R.K."/>
            <person name="de la Bastide M."/>
            <person name="Habermann K."/>
            <person name="Parnell L."/>
            <person name="Dedhia N."/>
            <person name="Gnoj L."/>
            <person name="Schutz K."/>
            <person name="Huang E."/>
            <person name="Spiegel L."/>
            <person name="Sekhon M."/>
            <person name="Murray J."/>
            <person name="Sheet P."/>
            <person name="Cordes M."/>
            <person name="Abu-Threideh J."/>
            <person name="Stoneking T."/>
            <person name="Kalicki J."/>
            <person name="Graves T."/>
            <person name="Harmon G."/>
            <person name="Edwards J."/>
            <person name="Latreille P."/>
            <person name="Courtney L."/>
            <person name="Cloud J."/>
            <person name="Abbott A."/>
            <person name="Scott K."/>
            <person name="Johnson D."/>
            <person name="Minx P."/>
            <person name="Bentley D."/>
            <person name="Fulton B."/>
            <person name="Miller N."/>
            <person name="Greco T."/>
            <person name="Kemp K."/>
            <person name="Kramer J."/>
            <person name="Fulton L."/>
            <person name="Mardis E."/>
            <person name="Dante M."/>
            <person name="Pepin K."/>
            <person name="Hillier L.W."/>
            <person name="Nelson J."/>
            <person name="Spieth J."/>
            <person name="Ryan E."/>
            <person name="Andrews S."/>
            <person name="Geisel C."/>
            <person name="Layman D."/>
            <person name="Du H."/>
            <person name="Ali J."/>
            <person name="Berghoff A."/>
            <person name="Jones K."/>
            <person name="Drone K."/>
            <person name="Cotton M."/>
            <person name="Joshu C."/>
            <person name="Antonoiu B."/>
            <person name="Zidanic M."/>
            <person name="Strong C."/>
            <person name="Sun H."/>
            <person name="Lamar B."/>
            <person name="Yordan C."/>
            <person name="Ma P."/>
            <person name="Zhong J."/>
            <person name="Preston R."/>
            <person name="Vil D."/>
            <person name="Shekher M."/>
            <person name="Matero A."/>
            <person name="Shah R."/>
            <person name="Swaby I.K."/>
            <person name="O'Shaughnessy A."/>
            <person name="Rodriguez M."/>
            <person name="Hoffman J."/>
            <person name="Till S."/>
            <person name="Granat S."/>
            <person name="Shohdy N."/>
            <person name="Hasegawa A."/>
            <person name="Hameed A."/>
            <person name="Lodhi M."/>
            <person name="Johnson A."/>
            <person name="Chen E."/>
            <person name="Marra M.A."/>
            <person name="Martienssen R."/>
            <person name="McCombie W.R."/>
        </authorList>
    </citation>
    <scope>NUCLEOTIDE SEQUENCE [LARGE SCALE GENOMIC DNA]</scope>
    <source>
        <strain>cv. Columbia</strain>
    </source>
</reference>
<reference key="2">
    <citation type="journal article" date="2017" name="Plant J.">
        <title>Araport11: a complete reannotation of the Arabidopsis thaliana reference genome.</title>
        <authorList>
            <person name="Cheng C.Y."/>
            <person name="Krishnakumar V."/>
            <person name="Chan A.P."/>
            <person name="Thibaud-Nissen F."/>
            <person name="Schobel S."/>
            <person name="Town C.D."/>
        </authorList>
    </citation>
    <scope>GENOME REANNOTATION</scope>
    <source>
        <strain>cv. Columbia</strain>
    </source>
</reference>
<reference key="3">
    <citation type="submission" date="2006-07" db="EMBL/GenBank/DDBJ databases">
        <title>Large-scale analysis of RIKEN Arabidopsis full-length (RAFL) cDNAs.</title>
        <authorList>
            <person name="Totoki Y."/>
            <person name="Seki M."/>
            <person name="Ishida J."/>
            <person name="Nakajima M."/>
            <person name="Enju A."/>
            <person name="Kamiya A."/>
            <person name="Narusaka M."/>
            <person name="Shin-i T."/>
            <person name="Nakagawa M."/>
            <person name="Sakamoto N."/>
            <person name="Oishi K."/>
            <person name="Kohara Y."/>
            <person name="Kobayashi M."/>
            <person name="Toyoda A."/>
            <person name="Sakaki Y."/>
            <person name="Sakurai T."/>
            <person name="Iida K."/>
            <person name="Akiyama K."/>
            <person name="Satou M."/>
            <person name="Toyoda T."/>
            <person name="Konagaya A."/>
            <person name="Carninci P."/>
            <person name="Kawai J."/>
            <person name="Hayashizaki Y."/>
            <person name="Shinozaki K."/>
        </authorList>
    </citation>
    <scope>NUCLEOTIDE SEQUENCE [LARGE SCALE MRNA] (ISOFORM 1)</scope>
    <source>
        <strain>cv. Columbia</strain>
    </source>
</reference>
<reference key="4">
    <citation type="journal article" date="2000" name="Proc. Natl. Acad. Sci. U.S.A.">
        <title>Arabidopsis RelA/SpoT homologs implicate (p)ppGpp in plant signaling.</title>
        <authorList>
            <person name="van der Biezen E.A."/>
            <person name="Sun J."/>
            <person name="Coleman M.J."/>
            <person name="Bibb M.J."/>
            <person name="Jones J.D."/>
        </authorList>
    </citation>
    <scope>INTERACTION WITH RPP5</scope>
</reference>
<reference key="5">
    <citation type="journal article" date="2002" name="Plant J.">
        <title>Arabidopsis RPP4 is a member of the RPP5 multigene family of TIR-NB-LRR genes and confers downy mildew resistance through multiple signalling components.</title>
        <authorList>
            <person name="van der Biezen E.A."/>
            <person name="Freddie C.T."/>
            <person name="Kahn K."/>
            <person name="Parker J.E."/>
            <person name="Jones J.D."/>
        </authorList>
    </citation>
    <scope>INTERACTION WITH RPP4 AND RPP5</scope>
</reference>
<reference key="6">
    <citation type="journal article" date="2008" name="Planta">
        <title>Expression profiling of four RelA/SpoT-like proteins, homologues of bacterial stringent factors, in Arabidopsis thaliana.</title>
        <authorList>
            <person name="Mizusawa K."/>
            <person name="Masuda S."/>
            <person name="Ohta H."/>
        </authorList>
    </citation>
    <scope>FUNCTION</scope>
    <scope>SUBCELLULAR LOCATION</scope>
    <scope>TISSUE SPECIFICITY</scope>
    <scope>INDUCTION</scope>
</reference>
<dbReference type="EC" id="2.7.6.5"/>
<dbReference type="EMBL" id="AL161494">
    <property type="protein sequence ID" value="CAB80719.1"/>
    <property type="status" value="ALT_SEQ"/>
    <property type="molecule type" value="Genomic_DNA"/>
</dbReference>
<dbReference type="EMBL" id="CP002687">
    <property type="protein sequence ID" value="AEE82147.1"/>
    <property type="molecule type" value="Genomic_DNA"/>
</dbReference>
<dbReference type="EMBL" id="CP002687">
    <property type="protein sequence ID" value="AEE82148.1"/>
    <property type="molecule type" value="Genomic_DNA"/>
</dbReference>
<dbReference type="EMBL" id="AK227003">
    <property type="protein sequence ID" value="BAE99068.1"/>
    <property type="molecule type" value="mRNA"/>
</dbReference>
<dbReference type="PIR" id="H85028">
    <property type="entry name" value="H85028"/>
</dbReference>
<dbReference type="RefSeq" id="NP_567226.1">
    <molecule id="F4JHA2-2"/>
    <property type="nucleotide sequence ID" value="NM_116459.4"/>
</dbReference>
<dbReference type="RefSeq" id="NP_849287.2">
    <molecule id="F4JHA2-1"/>
    <property type="nucleotide sequence ID" value="NM_178956.4"/>
</dbReference>
<dbReference type="SMR" id="F4JHA2"/>
<dbReference type="BioGRID" id="13387">
    <property type="interactions" value="1"/>
</dbReference>
<dbReference type="FunCoup" id="F4JHA2">
    <property type="interactions" value="723"/>
</dbReference>
<dbReference type="STRING" id="3702.F4JHA2"/>
<dbReference type="PaxDb" id="3702-AT4G02260.1"/>
<dbReference type="ProteomicsDB" id="228061">
    <molecule id="F4JHA2-1"/>
</dbReference>
<dbReference type="EnsemblPlants" id="AT4G02260.1">
    <molecule id="F4JHA2-1"/>
    <property type="protein sequence ID" value="AT4G02260.1"/>
    <property type="gene ID" value="AT4G02260"/>
</dbReference>
<dbReference type="EnsemblPlants" id="AT4G02260.2">
    <molecule id="F4JHA2-2"/>
    <property type="protein sequence ID" value="AT4G02260.2"/>
    <property type="gene ID" value="AT4G02260"/>
</dbReference>
<dbReference type="GeneID" id="828096"/>
<dbReference type="Gramene" id="AT4G02260.1">
    <molecule id="F4JHA2-1"/>
    <property type="protein sequence ID" value="AT4G02260.1"/>
    <property type="gene ID" value="AT4G02260"/>
</dbReference>
<dbReference type="Gramene" id="AT4G02260.2">
    <molecule id="F4JHA2-2"/>
    <property type="protein sequence ID" value="AT4G02260.2"/>
    <property type="gene ID" value="AT4G02260"/>
</dbReference>
<dbReference type="KEGG" id="ath:AT4G02260"/>
<dbReference type="Araport" id="AT4G02260"/>
<dbReference type="TAIR" id="AT4G02260">
    <property type="gene designation" value="RSH1"/>
</dbReference>
<dbReference type="eggNOG" id="KOG1157">
    <property type="taxonomic scope" value="Eukaryota"/>
</dbReference>
<dbReference type="InParanoid" id="F4JHA2"/>
<dbReference type="OrthoDB" id="430679at2759"/>
<dbReference type="PRO" id="PR:F4JHA2"/>
<dbReference type="Proteomes" id="UP000006548">
    <property type="component" value="Chromosome 4"/>
</dbReference>
<dbReference type="ExpressionAtlas" id="F4JHA2">
    <property type="expression patterns" value="baseline and differential"/>
</dbReference>
<dbReference type="GO" id="GO:0009507">
    <property type="term" value="C:chloroplast"/>
    <property type="evidence" value="ECO:0000314"/>
    <property type="project" value="TAIR"/>
</dbReference>
<dbReference type="GO" id="GO:0005524">
    <property type="term" value="F:ATP binding"/>
    <property type="evidence" value="ECO:0007669"/>
    <property type="project" value="UniProtKB-KW"/>
</dbReference>
<dbReference type="GO" id="GO:0005525">
    <property type="term" value="F:GTP binding"/>
    <property type="evidence" value="ECO:0007669"/>
    <property type="project" value="UniProtKB-KW"/>
</dbReference>
<dbReference type="GO" id="GO:0008728">
    <property type="term" value="F:GTP diphosphokinase activity"/>
    <property type="evidence" value="ECO:0007669"/>
    <property type="project" value="UniProtKB-EC"/>
</dbReference>
<dbReference type="GO" id="GO:0008893">
    <property type="term" value="F:guanosine-3',5'-bis(diphosphate) 3'-diphosphatase activity"/>
    <property type="evidence" value="ECO:0000315"/>
    <property type="project" value="TAIR"/>
</dbReference>
<dbReference type="GO" id="GO:0016301">
    <property type="term" value="F:kinase activity"/>
    <property type="evidence" value="ECO:0007669"/>
    <property type="project" value="UniProtKB-KW"/>
</dbReference>
<dbReference type="GO" id="GO:0015969">
    <property type="term" value="P:guanosine tetraphosphate metabolic process"/>
    <property type="evidence" value="ECO:0007669"/>
    <property type="project" value="InterPro"/>
</dbReference>
<dbReference type="GO" id="GO:0010150">
    <property type="term" value="P:leaf senescence"/>
    <property type="evidence" value="ECO:0000315"/>
    <property type="project" value="TAIR"/>
</dbReference>
<dbReference type="GO" id="GO:0015979">
    <property type="term" value="P:photosynthesis"/>
    <property type="evidence" value="ECO:0000314"/>
    <property type="project" value="TAIR"/>
</dbReference>
<dbReference type="GO" id="GO:0009611">
    <property type="term" value="P:response to wounding"/>
    <property type="evidence" value="ECO:0000270"/>
    <property type="project" value="TAIR"/>
</dbReference>
<dbReference type="CDD" id="cd00077">
    <property type="entry name" value="HDc"/>
    <property type="match status" value="1"/>
</dbReference>
<dbReference type="CDD" id="cd05399">
    <property type="entry name" value="NT_Rel-Spo_like"/>
    <property type="match status" value="1"/>
</dbReference>
<dbReference type="CDD" id="cd01668">
    <property type="entry name" value="TGS_RSH"/>
    <property type="match status" value="1"/>
</dbReference>
<dbReference type="FunFam" id="3.10.20.30:FF:000002">
    <property type="entry name" value="GTP pyrophosphokinase (RelA/SpoT)"/>
    <property type="match status" value="1"/>
</dbReference>
<dbReference type="FunFam" id="1.10.3210.10:FF:000031">
    <property type="entry name" value="RELA/SPOT homolog 1"/>
    <property type="match status" value="1"/>
</dbReference>
<dbReference type="Gene3D" id="3.10.20.30">
    <property type="match status" value="1"/>
</dbReference>
<dbReference type="Gene3D" id="3.30.460.10">
    <property type="entry name" value="Beta Polymerase, domain 2"/>
    <property type="match status" value="1"/>
</dbReference>
<dbReference type="Gene3D" id="1.10.3210.10">
    <property type="entry name" value="Hypothetical protein af1432"/>
    <property type="match status" value="1"/>
</dbReference>
<dbReference type="InterPro" id="IPR045865">
    <property type="entry name" value="ACT-like_dom_sf"/>
</dbReference>
<dbReference type="InterPro" id="IPR012675">
    <property type="entry name" value="Beta-grasp_dom_sf"/>
</dbReference>
<dbReference type="InterPro" id="IPR003607">
    <property type="entry name" value="HD/PDEase_dom"/>
</dbReference>
<dbReference type="InterPro" id="IPR006674">
    <property type="entry name" value="HD_domain"/>
</dbReference>
<dbReference type="InterPro" id="IPR043519">
    <property type="entry name" value="NT_sf"/>
</dbReference>
<dbReference type="InterPro" id="IPR007685">
    <property type="entry name" value="RelA_SpoT"/>
</dbReference>
<dbReference type="InterPro" id="IPR004095">
    <property type="entry name" value="TGS"/>
</dbReference>
<dbReference type="InterPro" id="IPR012676">
    <property type="entry name" value="TGS-like"/>
</dbReference>
<dbReference type="InterPro" id="IPR033655">
    <property type="entry name" value="TGS_RelA/SpoT"/>
</dbReference>
<dbReference type="PANTHER" id="PTHR43061">
    <property type="entry name" value="GTP DIPHOSPHOKINASE RSH1, CHLOROPLASTIC-RELATED"/>
    <property type="match status" value="1"/>
</dbReference>
<dbReference type="PANTHER" id="PTHR43061:SF1">
    <property type="entry name" value="GTP DIPHOSPHOKINASE RSH1, CHLOROPLASTIC-RELATED"/>
    <property type="match status" value="1"/>
</dbReference>
<dbReference type="Pfam" id="PF13328">
    <property type="entry name" value="HD_4"/>
    <property type="match status" value="1"/>
</dbReference>
<dbReference type="Pfam" id="PF04607">
    <property type="entry name" value="RelA_SpoT"/>
    <property type="match status" value="1"/>
</dbReference>
<dbReference type="Pfam" id="PF02824">
    <property type="entry name" value="TGS"/>
    <property type="match status" value="1"/>
</dbReference>
<dbReference type="SMART" id="SM00471">
    <property type="entry name" value="HDc"/>
    <property type="match status" value="1"/>
</dbReference>
<dbReference type="SMART" id="SM00954">
    <property type="entry name" value="RelA_SpoT"/>
    <property type="match status" value="1"/>
</dbReference>
<dbReference type="SUPFAM" id="SSF55021">
    <property type="entry name" value="ACT-like"/>
    <property type="match status" value="1"/>
</dbReference>
<dbReference type="SUPFAM" id="SSF109604">
    <property type="entry name" value="HD-domain/PDEase-like"/>
    <property type="match status" value="1"/>
</dbReference>
<dbReference type="SUPFAM" id="SSF81301">
    <property type="entry name" value="Nucleotidyltransferase"/>
    <property type="match status" value="1"/>
</dbReference>
<dbReference type="SUPFAM" id="SSF81271">
    <property type="entry name" value="TGS-like"/>
    <property type="match status" value="1"/>
</dbReference>
<dbReference type="PROSITE" id="PS51831">
    <property type="entry name" value="HD"/>
    <property type="match status" value="1"/>
</dbReference>
<dbReference type="PROSITE" id="PS51880">
    <property type="entry name" value="TGS"/>
    <property type="match status" value="1"/>
</dbReference>
<organism>
    <name type="scientific">Arabidopsis thaliana</name>
    <name type="common">Mouse-ear cress</name>
    <dbReference type="NCBI Taxonomy" id="3702"/>
    <lineage>
        <taxon>Eukaryota</taxon>
        <taxon>Viridiplantae</taxon>
        <taxon>Streptophyta</taxon>
        <taxon>Embryophyta</taxon>
        <taxon>Tracheophyta</taxon>
        <taxon>Spermatophyta</taxon>
        <taxon>Magnoliopsida</taxon>
        <taxon>eudicotyledons</taxon>
        <taxon>Gunneridae</taxon>
        <taxon>Pentapetalae</taxon>
        <taxon>rosids</taxon>
        <taxon>malvids</taxon>
        <taxon>Brassicales</taxon>
        <taxon>Brassicaceae</taxon>
        <taxon>Camelineae</taxon>
        <taxon>Arabidopsis</taxon>
    </lineage>
</organism>
<sequence>MTSASSMSVSVECVNICNLTKGDGNARSDCSALSCAWKAPRALTGFLASTAHPPVCSVYSCGRNGRKSRMKACAWQRYEYEVGFSEAPYFVNVRNILKSRLSCGGHKRWELYCVSAESSSGASSDVTVETLWEDLFPSISYLPRKELEFVQKGLKLAFEAHHGQKRRSGEPFIIHPVAVARILGELELDWESIVAGLLHDTVEDTNFITFEKIEEEFGATVRHIVEGETKVSKLGKLKCKTESETIQDVKADDLRQMFLAMTDEVRVIIVKLADRLHNMRTLCHMPPHKQSSIAGETLQVFAPLAKLLGMYSIKSELENLSFMYVSAEDYDRVTSRIANLYKEHEKELTEANRILVKKIEDDQFLDLVTVNTDVRSVCKETYSIYKAALKSKGSINDYNQIAQQLRIVVKPKPSVGVGPLCSPQQICYHVLGLVHEIWKPIPRTVKDYIATPKPNGYQSLHTTVIPFLYESMFRLEVQIRTEEMDLIAERGIAVYYNGKSLSTGLVGNAVPLGRNSRGKTGCLNNADFALRVGWLNAIREWQEEFVGNMSSREFVDTITRDLLGSRVFVFTPKGEIKNLPKGATVVDYAYLIHTEIGNKMVAAKVNGNLVSPTHVLENAEVVEIVTYNALSSKSAFQRHKQWLQHAKTRSARHKIMRFLREQAAQCAAEITQDQVNDFVADSDSDVEDLTEDSRKSLQWWEKILVNVKQFQSQDKSRDTTPAPQNGSVWAPKVNGKHNKAIKNSSSDEPEFLLPGDGIARILPANIPAYKEVLPGLDSWRDSKIATWHHLEGQSIEWLCVVSMDRKGIIAEVTTVLAAEGIALCSCVAEIDRGRGLAVMLFQIEANIESLVSVCAKVDLVLGVLGWSSGCSWPRSTENAQVLEC</sequence>
<proteinExistence type="evidence at protein level"/>